<sequence length="159" mass="16939">MRVYLGSDHAGFELKQQIIAHLEQSGHQPIDCGAFSYDADDDYPAFCIAAATRTVADPDSLGIVLGGSGNGEQIAANKVPGARCALAWSVETAQLAREHNNAQLIGIGGRMHTVAEALAIVDAFVTTPWSKAPRHQRRIDILAEYERTHQAPPVPGAVG</sequence>
<evidence type="ECO:0000250" key="1">
    <source>
        <dbReference type="UniProtKB" id="P9WKD7"/>
    </source>
</evidence>
<evidence type="ECO:0000305" key="2"/>
<dbReference type="EC" id="5.3.1.6" evidence="1"/>
<dbReference type="EMBL" id="AE016958">
    <property type="protein sequence ID" value="AAS04602.1"/>
    <property type="molecule type" value="Genomic_DNA"/>
</dbReference>
<dbReference type="RefSeq" id="WP_003875844.1">
    <property type="nucleotide sequence ID" value="NZ_CP106873.1"/>
</dbReference>
<dbReference type="SMR" id="Q73XM4"/>
<dbReference type="STRING" id="262316.MAP_2285c"/>
<dbReference type="KEGG" id="mpa:MAP_2285c"/>
<dbReference type="eggNOG" id="COG0698">
    <property type="taxonomic scope" value="Bacteria"/>
</dbReference>
<dbReference type="HOGENOM" id="CLU_091396_4_0_11"/>
<dbReference type="UniPathway" id="UPA00115">
    <property type="reaction ID" value="UER00412"/>
</dbReference>
<dbReference type="Proteomes" id="UP000000580">
    <property type="component" value="Chromosome"/>
</dbReference>
<dbReference type="GO" id="GO:0004751">
    <property type="term" value="F:ribose-5-phosphate isomerase activity"/>
    <property type="evidence" value="ECO:0000250"/>
    <property type="project" value="UniProtKB"/>
</dbReference>
<dbReference type="GO" id="GO:0019316">
    <property type="term" value="P:D-allose catabolic process"/>
    <property type="evidence" value="ECO:0007669"/>
    <property type="project" value="TreeGrafter"/>
</dbReference>
<dbReference type="GO" id="GO:0009052">
    <property type="term" value="P:pentose-phosphate shunt, non-oxidative branch"/>
    <property type="evidence" value="ECO:0000250"/>
    <property type="project" value="UniProtKB"/>
</dbReference>
<dbReference type="FunFam" id="3.40.1400.10:FF:000002">
    <property type="entry name" value="Ribose-5-phosphate isomerase B"/>
    <property type="match status" value="1"/>
</dbReference>
<dbReference type="Gene3D" id="3.40.1400.10">
    <property type="entry name" value="Sugar-phosphate isomerase, RpiB/LacA/LacB"/>
    <property type="match status" value="1"/>
</dbReference>
<dbReference type="InterPro" id="IPR011860">
    <property type="entry name" value="Rib-5-P_Isoase_Actino"/>
</dbReference>
<dbReference type="InterPro" id="IPR003500">
    <property type="entry name" value="RpiB_LacA_LacB"/>
</dbReference>
<dbReference type="InterPro" id="IPR036569">
    <property type="entry name" value="RpiB_LacA_LacB_sf"/>
</dbReference>
<dbReference type="NCBIfam" id="NF004051">
    <property type="entry name" value="PRK05571.1"/>
    <property type="match status" value="1"/>
</dbReference>
<dbReference type="NCBIfam" id="TIGR02133">
    <property type="entry name" value="RPI_actino"/>
    <property type="match status" value="1"/>
</dbReference>
<dbReference type="NCBIfam" id="TIGR00689">
    <property type="entry name" value="rpiB_lacA_lacB"/>
    <property type="match status" value="1"/>
</dbReference>
<dbReference type="PANTHER" id="PTHR30345:SF0">
    <property type="entry name" value="DNA DAMAGE-REPAIR_TOLERATION PROTEIN DRT102"/>
    <property type="match status" value="1"/>
</dbReference>
<dbReference type="PANTHER" id="PTHR30345">
    <property type="entry name" value="RIBOSE-5-PHOSPHATE ISOMERASE B"/>
    <property type="match status" value="1"/>
</dbReference>
<dbReference type="Pfam" id="PF02502">
    <property type="entry name" value="LacAB_rpiB"/>
    <property type="match status" value="1"/>
</dbReference>
<dbReference type="PIRSF" id="PIRSF005384">
    <property type="entry name" value="RpiB_LacA_B"/>
    <property type="match status" value="1"/>
</dbReference>
<dbReference type="SUPFAM" id="SSF89623">
    <property type="entry name" value="Ribose/Galactose isomerase RpiB/AlsB"/>
    <property type="match status" value="1"/>
</dbReference>
<keyword id="KW-0119">Carbohydrate metabolism</keyword>
<keyword id="KW-0413">Isomerase</keyword>
<keyword id="KW-1185">Reference proteome</keyword>
<name>RPIB_MYCPA</name>
<feature type="chain" id="PRO_0000251149" description="Ribose-5-phosphate isomerase B">
    <location>
        <begin position="1"/>
        <end position="159"/>
    </location>
</feature>
<feature type="active site" description="Proton acceptor" evidence="1">
    <location>
        <position position="72"/>
    </location>
</feature>
<feature type="active site" description="Proton donor" evidence="1">
    <location>
        <position position="99"/>
    </location>
</feature>
<feature type="binding site" evidence="1">
    <location>
        <begin position="8"/>
        <end position="9"/>
    </location>
    <ligand>
        <name>D-ribulose 5-phosphate</name>
        <dbReference type="ChEBI" id="CHEBI:58121"/>
    </ligand>
</feature>
<feature type="binding site" evidence="1">
    <location>
        <begin position="67"/>
        <end position="71"/>
    </location>
    <ligand>
        <name>D-ribulose 5-phosphate</name>
        <dbReference type="ChEBI" id="CHEBI:58121"/>
    </ligand>
</feature>
<feature type="binding site" evidence="1">
    <location>
        <position position="100"/>
    </location>
    <ligand>
        <name>D-ribulose 5-phosphate</name>
        <dbReference type="ChEBI" id="CHEBI:58121"/>
    </ligand>
</feature>
<feature type="binding site" evidence="1">
    <location>
        <position position="110"/>
    </location>
    <ligand>
        <name>D-ribulose 5-phosphate</name>
        <dbReference type="ChEBI" id="CHEBI:58121"/>
    </ligand>
</feature>
<feature type="binding site" evidence="1">
    <location>
        <position position="134"/>
    </location>
    <ligand>
        <name>D-ribulose 5-phosphate</name>
        <dbReference type="ChEBI" id="CHEBI:58121"/>
    </ligand>
</feature>
<feature type="binding site" evidence="1">
    <location>
        <position position="138"/>
    </location>
    <ligand>
        <name>D-ribulose 5-phosphate</name>
        <dbReference type="ChEBI" id="CHEBI:58121"/>
    </ligand>
</feature>
<reference key="1">
    <citation type="journal article" date="2005" name="Proc. Natl. Acad. Sci. U.S.A.">
        <title>The complete genome sequence of Mycobacterium avium subspecies paratuberculosis.</title>
        <authorList>
            <person name="Li L."/>
            <person name="Bannantine J.P."/>
            <person name="Zhang Q."/>
            <person name="Amonsin A."/>
            <person name="May B.J."/>
            <person name="Alt D."/>
            <person name="Banerji N."/>
            <person name="Kanjilal S."/>
            <person name="Kapur V."/>
        </authorList>
    </citation>
    <scope>NUCLEOTIDE SEQUENCE [LARGE SCALE GENOMIC DNA]</scope>
    <source>
        <strain>ATCC BAA-968 / K-10</strain>
    </source>
</reference>
<gene>
    <name evidence="1" type="primary">rpiB</name>
    <name type="synonym">rpi</name>
    <name type="ordered locus">MAP_2285c</name>
</gene>
<protein>
    <recommendedName>
        <fullName evidence="1">Ribose-5-phosphate isomerase B</fullName>
        <ecNumber evidence="1">5.3.1.6</ecNumber>
    </recommendedName>
    <alternativeName>
        <fullName evidence="1">Phosphoriboisomerase B</fullName>
    </alternativeName>
</protein>
<organism>
    <name type="scientific">Mycolicibacterium paratuberculosis (strain ATCC BAA-968 / K-10)</name>
    <name type="common">Mycobacterium paratuberculosis</name>
    <dbReference type="NCBI Taxonomy" id="262316"/>
    <lineage>
        <taxon>Bacteria</taxon>
        <taxon>Bacillati</taxon>
        <taxon>Actinomycetota</taxon>
        <taxon>Actinomycetes</taxon>
        <taxon>Mycobacteriales</taxon>
        <taxon>Mycobacteriaceae</taxon>
        <taxon>Mycobacterium</taxon>
        <taxon>Mycobacterium avium complex (MAC)</taxon>
    </lineage>
</organism>
<proteinExistence type="inferred from homology"/>
<comment type="function">
    <text evidence="1">Catalyzes the interconversion of ribulose-5-P and ribose-5-P.</text>
</comment>
<comment type="catalytic activity">
    <reaction evidence="1">
        <text>aldehydo-D-ribose 5-phosphate = D-ribulose 5-phosphate</text>
        <dbReference type="Rhea" id="RHEA:14657"/>
        <dbReference type="ChEBI" id="CHEBI:58121"/>
        <dbReference type="ChEBI" id="CHEBI:58273"/>
        <dbReference type="EC" id="5.3.1.6"/>
    </reaction>
</comment>
<comment type="pathway">
    <text evidence="1">Carbohydrate degradation; pentose phosphate pathway; D-ribose 5-phosphate from D-ribulose 5-phosphate (non-oxidative stage): step 1/1.</text>
</comment>
<comment type="subunit">
    <text evidence="1">Homodimer.</text>
</comment>
<comment type="miscellaneous">
    <text evidence="1">In mycobacterial enzymes, the usual proton acceptor is not a cysteine, but is remplaced by a glutamate.</text>
</comment>
<comment type="similarity">
    <text evidence="2">Belongs to the LacAB/RpiB family.</text>
</comment>
<accession>Q73XM4</accession>